<gene>
    <name evidence="1" type="primary">rrp41</name>
    <name type="ordered locus">TGAM_2036</name>
</gene>
<name>RRP41_THEGJ</name>
<accession>C5A2B9</accession>
<reference key="1">
    <citation type="journal article" date="2007" name="Genome Biol.">
        <title>Genome analysis and genome-wide proteomics of Thermococcus gammatolerans, the most radioresistant organism known amongst the Archaea.</title>
        <authorList>
            <person name="Zivanovic Y."/>
            <person name="Armengaud J."/>
            <person name="Lagorce A."/>
            <person name="Leplat C."/>
            <person name="Guerin P."/>
            <person name="Dutertre M."/>
            <person name="Anthouard V."/>
            <person name="Forterre P."/>
            <person name="Wincker P."/>
            <person name="Confalonieri F."/>
        </authorList>
    </citation>
    <scope>NUCLEOTIDE SEQUENCE [LARGE SCALE GENOMIC DNA]</scope>
    <source>
        <strain>DSM 15229 / JCM 11827 / EJ3</strain>
    </source>
</reference>
<evidence type="ECO:0000255" key="1">
    <source>
        <dbReference type="HAMAP-Rule" id="MF_00591"/>
    </source>
</evidence>
<sequence length="249" mass="27604">MMGRPEGLKLIDENGRRIDGRRKYELRKIHMEVGVLKNADGSAYIEWGKNKILAAVYGPREIHPKHLQRPDTAVLRVRYNMAPFSVEERKKPGPDRRSVEISKVIRGALEPALILEMFPRTVVDVFIEVLQADAGTRVAGITAASLALADAGVPMRDLVAACAAGKIDGEIVLDLNKDEDNYGEADVPVAIMPLKNDITLLQMDGYLTKEEFIEAVKLAIKGAKAVYQKQREALKEKYLKIAQEVAGDE</sequence>
<comment type="function">
    <text evidence="1">Catalytic component of the exosome, which is a complex involved in RNA degradation. Has 3'-&gt;5' exoribonuclease activity. Can also synthesize heteromeric RNA-tails.</text>
</comment>
<comment type="subunit">
    <text evidence="1">Component of the archaeal exosome complex. Forms a hexameric ring-like arrangement composed of 3 Rrp41-Rrp42 heterodimers. The hexameric ring associates with a trimer of Rrp4 and/or Csl4 subunits.</text>
</comment>
<comment type="subcellular location">
    <subcellularLocation>
        <location evidence="1">Cytoplasm</location>
    </subcellularLocation>
</comment>
<comment type="similarity">
    <text evidence="1">Belongs to the RNase PH family. Rrp41 subfamily.</text>
</comment>
<feature type="chain" id="PRO_1000212172" description="Exosome complex component Rrp41">
    <location>
        <begin position="1"/>
        <end position="249"/>
    </location>
</feature>
<organism>
    <name type="scientific">Thermococcus gammatolerans (strain DSM 15229 / JCM 11827 / EJ3)</name>
    <dbReference type="NCBI Taxonomy" id="593117"/>
    <lineage>
        <taxon>Archaea</taxon>
        <taxon>Methanobacteriati</taxon>
        <taxon>Methanobacteriota</taxon>
        <taxon>Thermococci</taxon>
        <taxon>Thermococcales</taxon>
        <taxon>Thermococcaceae</taxon>
        <taxon>Thermococcus</taxon>
    </lineage>
</organism>
<dbReference type="EC" id="3.1.13.-" evidence="1"/>
<dbReference type="EMBL" id="CP001398">
    <property type="protein sequence ID" value="ACS34538.1"/>
    <property type="molecule type" value="Genomic_DNA"/>
</dbReference>
<dbReference type="RefSeq" id="WP_015859641.1">
    <property type="nucleotide sequence ID" value="NC_012804.1"/>
</dbReference>
<dbReference type="SMR" id="C5A2B9"/>
<dbReference type="STRING" id="593117.TGAM_2036"/>
<dbReference type="PaxDb" id="593117-TGAM_2036"/>
<dbReference type="GeneID" id="7988602"/>
<dbReference type="KEGG" id="tga:TGAM_2036"/>
<dbReference type="PATRIC" id="fig|593117.10.peg.2047"/>
<dbReference type="eggNOG" id="arCOG01575">
    <property type="taxonomic scope" value="Archaea"/>
</dbReference>
<dbReference type="HOGENOM" id="CLU_063514_0_0_2"/>
<dbReference type="OrthoDB" id="24266at2157"/>
<dbReference type="Proteomes" id="UP000001488">
    <property type="component" value="Chromosome"/>
</dbReference>
<dbReference type="GO" id="GO:0000177">
    <property type="term" value="C:cytoplasmic exosome (RNase complex)"/>
    <property type="evidence" value="ECO:0007669"/>
    <property type="project" value="TreeGrafter"/>
</dbReference>
<dbReference type="GO" id="GO:0000175">
    <property type="term" value="F:3'-5'-RNA exonuclease activity"/>
    <property type="evidence" value="ECO:0007669"/>
    <property type="project" value="UniProtKB-UniRule"/>
</dbReference>
<dbReference type="GO" id="GO:0003723">
    <property type="term" value="F:RNA binding"/>
    <property type="evidence" value="ECO:0007669"/>
    <property type="project" value="TreeGrafter"/>
</dbReference>
<dbReference type="GO" id="GO:0010467">
    <property type="term" value="P:gene expression"/>
    <property type="evidence" value="ECO:0007669"/>
    <property type="project" value="UniProtKB-ARBA"/>
</dbReference>
<dbReference type="GO" id="GO:0016075">
    <property type="term" value="P:rRNA catabolic process"/>
    <property type="evidence" value="ECO:0007669"/>
    <property type="project" value="TreeGrafter"/>
</dbReference>
<dbReference type="CDD" id="cd11366">
    <property type="entry name" value="RNase_PH_archRRP41"/>
    <property type="match status" value="1"/>
</dbReference>
<dbReference type="FunFam" id="3.30.230.70:FF:000004">
    <property type="entry name" value="Exosome complex component Rrp41"/>
    <property type="match status" value="1"/>
</dbReference>
<dbReference type="Gene3D" id="3.30.230.70">
    <property type="entry name" value="GHMP Kinase, N-terminal domain"/>
    <property type="match status" value="1"/>
</dbReference>
<dbReference type="HAMAP" id="MF_00591">
    <property type="entry name" value="Exosome_Rrp41"/>
    <property type="match status" value="1"/>
</dbReference>
<dbReference type="InterPro" id="IPR001247">
    <property type="entry name" value="ExoRNase_PH_dom1"/>
</dbReference>
<dbReference type="InterPro" id="IPR015847">
    <property type="entry name" value="ExoRNase_PH_dom2"/>
</dbReference>
<dbReference type="InterPro" id="IPR036345">
    <property type="entry name" value="ExoRNase_PH_dom2_sf"/>
</dbReference>
<dbReference type="InterPro" id="IPR027408">
    <property type="entry name" value="PNPase/RNase_PH_dom_sf"/>
</dbReference>
<dbReference type="InterPro" id="IPR020568">
    <property type="entry name" value="Ribosomal_Su5_D2-typ_SF"/>
</dbReference>
<dbReference type="InterPro" id="IPR050080">
    <property type="entry name" value="RNase_PH"/>
</dbReference>
<dbReference type="InterPro" id="IPR011807">
    <property type="entry name" value="Rrp41"/>
</dbReference>
<dbReference type="NCBIfam" id="TIGR02065">
    <property type="entry name" value="ECX1"/>
    <property type="match status" value="1"/>
</dbReference>
<dbReference type="PANTHER" id="PTHR11953">
    <property type="entry name" value="EXOSOME COMPLEX COMPONENT"/>
    <property type="match status" value="1"/>
</dbReference>
<dbReference type="PANTHER" id="PTHR11953:SF0">
    <property type="entry name" value="EXOSOME COMPLEX COMPONENT RRP41"/>
    <property type="match status" value="1"/>
</dbReference>
<dbReference type="Pfam" id="PF01138">
    <property type="entry name" value="RNase_PH"/>
    <property type="match status" value="1"/>
</dbReference>
<dbReference type="Pfam" id="PF03725">
    <property type="entry name" value="RNase_PH_C"/>
    <property type="match status" value="1"/>
</dbReference>
<dbReference type="SUPFAM" id="SSF55666">
    <property type="entry name" value="Ribonuclease PH domain 2-like"/>
    <property type="match status" value="1"/>
</dbReference>
<dbReference type="SUPFAM" id="SSF54211">
    <property type="entry name" value="Ribosomal protein S5 domain 2-like"/>
    <property type="match status" value="1"/>
</dbReference>
<keyword id="KW-0963">Cytoplasm</keyword>
<keyword id="KW-0269">Exonuclease</keyword>
<keyword id="KW-0271">Exosome</keyword>
<keyword id="KW-0378">Hydrolase</keyword>
<keyword id="KW-0540">Nuclease</keyword>
<keyword id="KW-1185">Reference proteome</keyword>
<protein>
    <recommendedName>
        <fullName evidence="1">Exosome complex component Rrp41</fullName>
        <ecNumber evidence="1">3.1.13.-</ecNumber>
    </recommendedName>
</protein>
<proteinExistence type="inferred from homology"/>